<proteinExistence type="inferred from homology"/>
<accession>Q0PHY0</accession>
<evidence type="ECO:0000255" key="1">
    <source>
        <dbReference type="HAMAP-Rule" id="MF_01657"/>
    </source>
</evidence>
<evidence type="ECO:0000305" key="2"/>
<feature type="chain" id="PRO_0000387746" description="Acetaldehyde dehydrogenase">
    <location>
        <begin position="1"/>
        <end position="297"/>
    </location>
</feature>
<feature type="active site" description="Acyl-thioester intermediate" evidence="1">
    <location>
        <position position="133"/>
    </location>
</feature>
<feature type="binding site" evidence="1">
    <location>
        <begin position="18"/>
        <end position="21"/>
    </location>
    <ligand>
        <name>NAD(+)</name>
        <dbReference type="ChEBI" id="CHEBI:57540"/>
    </ligand>
</feature>
<feature type="binding site" evidence="1">
    <location>
        <begin position="165"/>
        <end position="173"/>
    </location>
    <ligand>
        <name>NAD(+)</name>
        <dbReference type="ChEBI" id="CHEBI:57540"/>
    </ligand>
</feature>
<feature type="binding site" evidence="1">
    <location>
        <position position="275"/>
    </location>
    <ligand>
        <name>NAD(+)</name>
        <dbReference type="ChEBI" id="CHEBI:57540"/>
    </ligand>
</feature>
<dbReference type="EC" id="1.2.1.10" evidence="1"/>
<dbReference type="EMBL" id="DQ832182">
    <property type="protein sequence ID" value="ABH03011.1"/>
    <property type="status" value="ALT_INIT"/>
    <property type="molecule type" value="Genomic_DNA"/>
</dbReference>
<dbReference type="SMR" id="Q0PHY0"/>
<dbReference type="GO" id="GO:0008774">
    <property type="term" value="F:acetaldehyde dehydrogenase (acetylating) activity"/>
    <property type="evidence" value="ECO:0007669"/>
    <property type="project" value="UniProtKB-UniRule"/>
</dbReference>
<dbReference type="GO" id="GO:0051287">
    <property type="term" value="F:NAD binding"/>
    <property type="evidence" value="ECO:0007669"/>
    <property type="project" value="UniProtKB-UniRule"/>
</dbReference>
<dbReference type="GO" id="GO:0009056">
    <property type="term" value="P:catabolic process"/>
    <property type="evidence" value="ECO:0007669"/>
    <property type="project" value="UniProtKB-KW"/>
</dbReference>
<dbReference type="CDD" id="cd23933">
    <property type="entry name" value="ALDH_C"/>
    <property type="match status" value="1"/>
</dbReference>
<dbReference type="Gene3D" id="3.30.360.10">
    <property type="entry name" value="Dihydrodipicolinate Reductase, domain 2"/>
    <property type="match status" value="1"/>
</dbReference>
<dbReference type="Gene3D" id="3.40.50.720">
    <property type="entry name" value="NAD(P)-binding Rossmann-like Domain"/>
    <property type="match status" value="1"/>
</dbReference>
<dbReference type="HAMAP" id="MF_01657">
    <property type="entry name" value="Ac_ald_DH_ac"/>
    <property type="match status" value="1"/>
</dbReference>
<dbReference type="InterPro" id="IPR003361">
    <property type="entry name" value="Acetaldehyde_dehydrogenase"/>
</dbReference>
<dbReference type="InterPro" id="IPR015426">
    <property type="entry name" value="Acetylaldehyde_DH_C"/>
</dbReference>
<dbReference type="InterPro" id="IPR036291">
    <property type="entry name" value="NAD(P)-bd_dom_sf"/>
</dbReference>
<dbReference type="InterPro" id="IPR000534">
    <property type="entry name" value="Semialdehyde_DH_NAD-bd"/>
</dbReference>
<dbReference type="NCBIfam" id="TIGR03215">
    <property type="entry name" value="ac_ald_DH_ac"/>
    <property type="match status" value="1"/>
</dbReference>
<dbReference type="NCBIfam" id="NF006157">
    <property type="entry name" value="PRK08300.1"/>
    <property type="match status" value="1"/>
</dbReference>
<dbReference type="Pfam" id="PF09290">
    <property type="entry name" value="AcetDehyd-dimer"/>
    <property type="match status" value="1"/>
</dbReference>
<dbReference type="Pfam" id="PF01118">
    <property type="entry name" value="Semialdhyde_dh"/>
    <property type="match status" value="1"/>
</dbReference>
<dbReference type="PIRSF" id="PIRSF015689">
    <property type="entry name" value="Actaldh_dh_actl"/>
    <property type="match status" value="1"/>
</dbReference>
<dbReference type="SMART" id="SM00859">
    <property type="entry name" value="Semialdhyde_dh"/>
    <property type="match status" value="1"/>
</dbReference>
<dbReference type="SUPFAM" id="SSF55347">
    <property type="entry name" value="Glyceraldehyde-3-phosphate dehydrogenase-like, C-terminal domain"/>
    <property type="match status" value="1"/>
</dbReference>
<dbReference type="SUPFAM" id="SSF51735">
    <property type="entry name" value="NAD(P)-binding Rossmann-fold domains"/>
    <property type="match status" value="1"/>
</dbReference>
<protein>
    <recommendedName>
        <fullName evidence="1">Acetaldehyde dehydrogenase</fullName>
        <ecNumber evidence="1">1.2.1.10</ecNumber>
    </recommendedName>
    <alternativeName>
        <fullName evidence="1">Acetaldehyde dehydrogenase [acetylating]</fullName>
    </alternativeName>
</protein>
<organism>
    <name type="scientific">Spirochaeta aurantia</name>
    <dbReference type="NCBI Taxonomy" id="147"/>
    <lineage>
        <taxon>Bacteria</taxon>
        <taxon>Pseudomonadati</taxon>
        <taxon>Spirochaetota</taxon>
        <taxon>Spirochaetia</taxon>
        <taxon>Spirochaetales</taxon>
        <taxon>Spirochaetaceae</taxon>
        <taxon>Spirochaeta</taxon>
    </lineage>
</organism>
<comment type="catalytic activity">
    <reaction evidence="1">
        <text>acetaldehyde + NAD(+) + CoA = acetyl-CoA + NADH + H(+)</text>
        <dbReference type="Rhea" id="RHEA:23288"/>
        <dbReference type="ChEBI" id="CHEBI:15343"/>
        <dbReference type="ChEBI" id="CHEBI:15378"/>
        <dbReference type="ChEBI" id="CHEBI:57287"/>
        <dbReference type="ChEBI" id="CHEBI:57288"/>
        <dbReference type="ChEBI" id="CHEBI:57540"/>
        <dbReference type="ChEBI" id="CHEBI:57945"/>
        <dbReference type="EC" id="1.2.1.10"/>
    </reaction>
</comment>
<comment type="similarity">
    <text evidence="1">Belongs to the acetaldehyde dehydrogenase family.</text>
</comment>
<comment type="sequence caution" evidence="2">
    <conflict type="erroneous initiation">
        <sequence resource="EMBL-CDS" id="ABH03011"/>
    </conflict>
</comment>
<name>ACDH_SPIAU</name>
<sequence>MGRFPLAAKPLQVAILGTGNIGTDLLLKIQRSQLLKCVAFVGRSSQSSGMVKARSLGVPCSDLSIEYFRQNGEKIDLVFDATSAKDHLVHAPILRELGIRVIDLTPAKVGKMCIPAVHRSSLLNEWNLNMVTCGGQASSPLAWAIGQTQGSIEYLEVVSSIASKSAGPATRLNLDEYIHTTEKALAELSGAKNTKAILVLNPAEPCIDMQTTVFAKVDSPDLLKLQKLLSEVIPRTQAYVPGYQVALGPIVDNGRISIMVRVRGVGDYLPEYAGNLDIINCAAIAMAEEYAKAAHEQ</sequence>
<keyword id="KW-0058">Aromatic hydrocarbons catabolism</keyword>
<keyword id="KW-0520">NAD</keyword>
<keyword id="KW-0560">Oxidoreductase</keyword>
<reference key="1">
    <citation type="submission" date="2006-06" db="EMBL/GenBank/DDBJ databases">
        <title>LGLA, the large glycolipid of Spirochaeta aurantia.</title>
        <authorList>
            <person name="Paul C.J."/>
            <person name="Vinogradov E."/>
            <person name="Tapping R.I."/>
            <person name="Perry M.B."/>
            <person name="Moyles D."/>
            <person name="Kropinski A.M."/>
        </authorList>
    </citation>
    <scope>NUCLEOTIDE SEQUENCE [GENOMIC DNA]</scope>
</reference>